<feature type="chain" id="PRO_0000062464" description="Ribulose bisphosphate carboxylase large chain">
    <location>
        <begin position="1" status="less than"/>
        <end position="465"/>
    </location>
</feature>
<feature type="active site" description="Proton acceptor" evidence="1">
    <location>
        <position position="165"/>
    </location>
</feature>
<feature type="active site" description="Proton acceptor" evidence="1">
    <location>
        <position position="284"/>
    </location>
</feature>
<feature type="binding site" description="in homodimeric partner" evidence="1">
    <location>
        <position position="113"/>
    </location>
    <ligand>
        <name>substrate</name>
    </ligand>
</feature>
<feature type="binding site" evidence="1">
    <location>
        <position position="163"/>
    </location>
    <ligand>
        <name>substrate</name>
    </ligand>
</feature>
<feature type="binding site" evidence="1">
    <location>
        <position position="167"/>
    </location>
    <ligand>
        <name>substrate</name>
    </ligand>
</feature>
<feature type="binding site" description="via carbamate group" evidence="1">
    <location>
        <position position="191"/>
    </location>
    <ligand>
        <name>Mg(2+)</name>
        <dbReference type="ChEBI" id="CHEBI:18420"/>
    </ligand>
</feature>
<feature type="binding site" evidence="1">
    <location>
        <position position="193"/>
    </location>
    <ligand>
        <name>Mg(2+)</name>
        <dbReference type="ChEBI" id="CHEBI:18420"/>
    </ligand>
</feature>
<feature type="binding site" evidence="1">
    <location>
        <position position="194"/>
    </location>
    <ligand>
        <name>Mg(2+)</name>
        <dbReference type="ChEBI" id="CHEBI:18420"/>
    </ligand>
</feature>
<feature type="binding site" evidence="1">
    <location>
        <position position="285"/>
    </location>
    <ligand>
        <name>substrate</name>
    </ligand>
</feature>
<feature type="binding site" evidence="1">
    <location>
        <position position="317"/>
    </location>
    <ligand>
        <name>substrate</name>
    </ligand>
</feature>
<feature type="binding site" evidence="1">
    <location>
        <position position="369"/>
    </location>
    <ligand>
        <name>substrate</name>
    </ligand>
</feature>
<feature type="site" description="Transition state stabilizer" evidence="1">
    <location>
        <position position="324"/>
    </location>
</feature>
<feature type="modified residue" description="N6,N6,N6-trimethyllysine" evidence="1">
    <location>
        <position position="4"/>
    </location>
</feature>
<feature type="modified residue" description="N6-carboxylysine" evidence="1">
    <location>
        <position position="191"/>
    </location>
</feature>
<feature type="disulfide bond" description="Interchain; in linked form" evidence="1">
    <location>
        <position position="237"/>
    </location>
</feature>
<feature type="non-terminal residue">
    <location>
        <position position="1"/>
    </location>
</feature>
<name>RBL_EUCUL</name>
<organism>
    <name type="scientific">Eucommia ulmoides</name>
    <name type="common">Hardy rubber tree</name>
    <dbReference type="NCBI Taxonomy" id="4392"/>
    <lineage>
        <taxon>Eukaryota</taxon>
        <taxon>Viridiplantae</taxon>
        <taxon>Streptophyta</taxon>
        <taxon>Embryophyta</taxon>
        <taxon>Tracheophyta</taxon>
        <taxon>Spermatophyta</taxon>
        <taxon>Magnoliopsida</taxon>
        <taxon>eudicotyledons</taxon>
        <taxon>Gunneridae</taxon>
        <taxon>Pentapetalae</taxon>
        <taxon>asterids</taxon>
        <taxon>lamiids</taxon>
        <taxon>Garryales</taxon>
        <taxon>Eucommiaceae</taxon>
        <taxon>Eucommia</taxon>
    </lineage>
</organism>
<dbReference type="EC" id="4.1.1.39" evidence="1"/>
<dbReference type="EMBL" id="L01917">
    <property type="protein sequence ID" value="AAA84217.2"/>
    <property type="molecule type" value="Genomic_DNA"/>
</dbReference>
<dbReference type="SMR" id="P28415"/>
<dbReference type="GO" id="GO:0009507">
    <property type="term" value="C:chloroplast"/>
    <property type="evidence" value="ECO:0007669"/>
    <property type="project" value="UniProtKB-SubCell"/>
</dbReference>
<dbReference type="GO" id="GO:0000287">
    <property type="term" value="F:magnesium ion binding"/>
    <property type="evidence" value="ECO:0007669"/>
    <property type="project" value="InterPro"/>
</dbReference>
<dbReference type="GO" id="GO:0004497">
    <property type="term" value="F:monooxygenase activity"/>
    <property type="evidence" value="ECO:0007669"/>
    <property type="project" value="UniProtKB-KW"/>
</dbReference>
<dbReference type="GO" id="GO:0016984">
    <property type="term" value="F:ribulose-bisphosphate carboxylase activity"/>
    <property type="evidence" value="ECO:0007669"/>
    <property type="project" value="UniProtKB-EC"/>
</dbReference>
<dbReference type="GO" id="GO:0009853">
    <property type="term" value="P:photorespiration"/>
    <property type="evidence" value="ECO:0007669"/>
    <property type="project" value="UniProtKB-KW"/>
</dbReference>
<dbReference type="GO" id="GO:0019253">
    <property type="term" value="P:reductive pentose-phosphate cycle"/>
    <property type="evidence" value="ECO:0007669"/>
    <property type="project" value="UniProtKB-KW"/>
</dbReference>
<dbReference type="CDD" id="cd08212">
    <property type="entry name" value="RuBisCO_large_I"/>
    <property type="match status" value="1"/>
</dbReference>
<dbReference type="FunFam" id="3.20.20.110:FF:000001">
    <property type="entry name" value="Ribulose bisphosphate carboxylase large chain"/>
    <property type="match status" value="1"/>
</dbReference>
<dbReference type="FunFam" id="3.30.70.150:FF:000001">
    <property type="entry name" value="Ribulose bisphosphate carboxylase large chain"/>
    <property type="match status" value="1"/>
</dbReference>
<dbReference type="Gene3D" id="3.20.20.110">
    <property type="entry name" value="Ribulose bisphosphate carboxylase, large subunit, C-terminal domain"/>
    <property type="match status" value="1"/>
</dbReference>
<dbReference type="Gene3D" id="3.30.70.150">
    <property type="entry name" value="RuBisCO large subunit, N-terminal domain"/>
    <property type="match status" value="1"/>
</dbReference>
<dbReference type="HAMAP" id="MF_01338">
    <property type="entry name" value="RuBisCO_L_type1"/>
    <property type="match status" value="1"/>
</dbReference>
<dbReference type="InterPro" id="IPR033966">
    <property type="entry name" value="RuBisCO"/>
</dbReference>
<dbReference type="InterPro" id="IPR020878">
    <property type="entry name" value="RuBisCo_large_chain_AS"/>
</dbReference>
<dbReference type="InterPro" id="IPR000685">
    <property type="entry name" value="RuBisCO_lsu_C"/>
</dbReference>
<dbReference type="InterPro" id="IPR036376">
    <property type="entry name" value="RuBisCO_lsu_C_sf"/>
</dbReference>
<dbReference type="InterPro" id="IPR017443">
    <property type="entry name" value="RuBisCO_lsu_fd_N"/>
</dbReference>
<dbReference type="InterPro" id="IPR036422">
    <property type="entry name" value="RuBisCO_lsu_N_sf"/>
</dbReference>
<dbReference type="InterPro" id="IPR020888">
    <property type="entry name" value="RuBisCO_lsuI"/>
</dbReference>
<dbReference type="NCBIfam" id="NF003252">
    <property type="entry name" value="PRK04208.1"/>
    <property type="match status" value="1"/>
</dbReference>
<dbReference type="PANTHER" id="PTHR42704">
    <property type="entry name" value="RIBULOSE BISPHOSPHATE CARBOXYLASE"/>
    <property type="match status" value="1"/>
</dbReference>
<dbReference type="PANTHER" id="PTHR42704:SF15">
    <property type="entry name" value="RIBULOSE BISPHOSPHATE CARBOXYLASE LARGE CHAIN"/>
    <property type="match status" value="1"/>
</dbReference>
<dbReference type="Pfam" id="PF00016">
    <property type="entry name" value="RuBisCO_large"/>
    <property type="match status" value="1"/>
</dbReference>
<dbReference type="Pfam" id="PF02788">
    <property type="entry name" value="RuBisCO_large_N"/>
    <property type="match status" value="1"/>
</dbReference>
<dbReference type="SFLD" id="SFLDG01052">
    <property type="entry name" value="RuBisCO"/>
    <property type="match status" value="1"/>
</dbReference>
<dbReference type="SFLD" id="SFLDS00014">
    <property type="entry name" value="RuBisCO"/>
    <property type="match status" value="1"/>
</dbReference>
<dbReference type="SFLD" id="SFLDG00301">
    <property type="entry name" value="RuBisCO-like_proteins"/>
    <property type="match status" value="1"/>
</dbReference>
<dbReference type="SUPFAM" id="SSF51649">
    <property type="entry name" value="RuBisCo, C-terminal domain"/>
    <property type="match status" value="1"/>
</dbReference>
<dbReference type="SUPFAM" id="SSF54966">
    <property type="entry name" value="RuBisCO, large subunit, small (N-terminal) domain"/>
    <property type="match status" value="1"/>
</dbReference>
<dbReference type="PROSITE" id="PS00157">
    <property type="entry name" value="RUBISCO_LARGE"/>
    <property type="match status" value="1"/>
</dbReference>
<gene>
    <name evidence="1" type="primary">rbcL</name>
</gene>
<keyword id="KW-0113">Calvin cycle</keyword>
<keyword id="KW-0120">Carbon dioxide fixation</keyword>
<keyword id="KW-0150">Chloroplast</keyword>
<keyword id="KW-1015">Disulfide bond</keyword>
<keyword id="KW-0456">Lyase</keyword>
<keyword id="KW-0460">Magnesium</keyword>
<keyword id="KW-0479">Metal-binding</keyword>
<keyword id="KW-0488">Methylation</keyword>
<keyword id="KW-0503">Monooxygenase</keyword>
<keyword id="KW-0560">Oxidoreductase</keyword>
<keyword id="KW-0601">Photorespiration</keyword>
<keyword id="KW-0602">Photosynthesis</keyword>
<keyword id="KW-0934">Plastid</keyword>
<evidence type="ECO:0000255" key="1">
    <source>
        <dbReference type="HAMAP-Rule" id="MF_01338"/>
    </source>
</evidence>
<proteinExistence type="inferred from homology"/>
<sequence>VGFKAGVKDYKLNYYTPDYETKDTDILAAFRVTPQPGVPPEEAGAAVAAESSTGTWTAVWTDGLTSLDRYKGRCYHIEPVAGEENQYIAYVAYPLDLFEEGSVTNMFTSIVGNVFGFKALRALRLEDLRIPPAYSKTFQGPPHGIQVERDKLNKYGRPLLGCTIKPKLGLSAKNYGRAVYECLRGGLDFTKDDENVNSQPFMRWRDRFLFCAEALYKAQAETGEIKGHYLNATAGTCEEMIKRAVFARELGVPIVMHDYLTGGFTANTSLAHYCRDNGLLLHIHRAMHAVIDRQKNHGIHFRVLAKALRMSGGDHIHAGTVVGKLEGERDITLGFVDLLRDDFVEKDRSRGIYFTQDWVSLPGVLPVASGGIHVWHMPALTEIFGDDSVLQFGGGTLGHPWGNAPGAVANRVALEACVRARNEGRDLAREGNEIIREAAKWSPELAAACEVWKAIKFEFPAMDTL</sequence>
<geneLocation type="chloroplast"/>
<accession>P28415</accession>
<reference key="1">
    <citation type="journal article" date="1992" name="Science">
        <title>Carnivorous plants: phylogeny and structural evolution.</title>
        <authorList>
            <person name="Albert V.A."/>
            <person name="Williams S.E."/>
            <person name="Chase M.W."/>
        </authorList>
    </citation>
    <scope>NUCLEOTIDE SEQUENCE [GENOMIC DNA]</scope>
</reference>
<comment type="function">
    <text evidence="1">RuBisCO catalyzes two reactions: the carboxylation of D-ribulose 1,5-bisphosphate, the primary event in carbon dioxide fixation, as well as the oxidative fragmentation of the pentose substrate in the photorespiration process. Both reactions occur simultaneously and in competition at the same active site.</text>
</comment>
<comment type="catalytic activity">
    <reaction evidence="1">
        <text>2 (2R)-3-phosphoglycerate + 2 H(+) = D-ribulose 1,5-bisphosphate + CO2 + H2O</text>
        <dbReference type="Rhea" id="RHEA:23124"/>
        <dbReference type="ChEBI" id="CHEBI:15377"/>
        <dbReference type="ChEBI" id="CHEBI:15378"/>
        <dbReference type="ChEBI" id="CHEBI:16526"/>
        <dbReference type="ChEBI" id="CHEBI:57870"/>
        <dbReference type="ChEBI" id="CHEBI:58272"/>
        <dbReference type="EC" id="4.1.1.39"/>
    </reaction>
</comment>
<comment type="catalytic activity">
    <reaction evidence="1">
        <text>D-ribulose 1,5-bisphosphate + O2 = 2-phosphoglycolate + (2R)-3-phosphoglycerate + 2 H(+)</text>
        <dbReference type="Rhea" id="RHEA:36631"/>
        <dbReference type="ChEBI" id="CHEBI:15378"/>
        <dbReference type="ChEBI" id="CHEBI:15379"/>
        <dbReference type="ChEBI" id="CHEBI:57870"/>
        <dbReference type="ChEBI" id="CHEBI:58033"/>
        <dbReference type="ChEBI" id="CHEBI:58272"/>
    </reaction>
</comment>
<comment type="cofactor">
    <cofactor evidence="1">
        <name>Mg(2+)</name>
        <dbReference type="ChEBI" id="CHEBI:18420"/>
    </cofactor>
    <text evidence="1">Binds 1 Mg(2+) ion per subunit.</text>
</comment>
<comment type="subunit">
    <text evidence="1">Heterohexadecamer of 8 large chains and 8 small chains; disulfide-linked. The disulfide link is formed within the large subunit homodimers.</text>
</comment>
<comment type="subcellular location">
    <subcellularLocation>
        <location>Plastid</location>
        <location>Chloroplast</location>
    </subcellularLocation>
</comment>
<comment type="PTM">
    <text evidence="1">The disulfide bond which can form in the large chain dimeric partners within the hexadecamer appears to be associated with oxidative stress and protein turnover.</text>
</comment>
<comment type="miscellaneous">
    <text evidence="1">The basic functional RuBisCO is composed of a large chain homodimer in a 'head-to-tail' conformation. In form I RuBisCO this homodimer is arranged in a barrel-like tetramer with the small subunits forming a tetrameric 'cap' on each end of the 'barrel'.</text>
</comment>
<comment type="similarity">
    <text evidence="1">Belongs to the RuBisCO large chain family. Type I subfamily.</text>
</comment>
<protein>
    <recommendedName>
        <fullName evidence="1">Ribulose bisphosphate carboxylase large chain</fullName>
        <shortName evidence="1">RuBisCO large subunit</shortName>
        <ecNumber evidence="1">4.1.1.39</ecNumber>
    </recommendedName>
</protein>